<protein>
    <recommendedName>
        <fullName evidence="1">Acetyl-coenzyme A carboxylase carboxyl transferase subunit beta</fullName>
        <shortName evidence="1">ACCase subunit beta</shortName>
        <shortName evidence="1">Acetyl-CoA carboxylase carboxyltransferase subunit beta</shortName>
        <ecNumber evidence="1">2.1.3.15</ecNumber>
    </recommendedName>
</protein>
<name>ACCD_RHOPS</name>
<sequence length="322" mass="35253">MNWLTNVVRPKIRNILRRETPENLWIKCPDTGQLVFYKDVEQNQFVIPGSNYHMRMGALARLRSVFDNETWYDVALPEVTADPLKFRDERKYADRIKDARTKTGAHDAVKVGYGKLEGLGVVAAVQDFDFMGGSLGMAAGEAIIRGLELAVEKHAPFIMFAASGGARMQEGILSLMQMPRTTVAVQMLREAGLPYIVVLTNPTTGGVTASYAMLGDIQLAEPGALIGFAGARVIEQTIREKLPDGFQRAEYLRDHGMVDMVVHRHELRPTLARLCRILTKTPLPAVEEIAASDDAAQDAEAAAATEIVVTPPEAPSPTAPQA</sequence>
<proteinExistence type="inferred from homology"/>
<accession>Q13EQ0</accession>
<organism>
    <name type="scientific">Rhodopseudomonas palustris (strain BisB5)</name>
    <dbReference type="NCBI Taxonomy" id="316057"/>
    <lineage>
        <taxon>Bacteria</taxon>
        <taxon>Pseudomonadati</taxon>
        <taxon>Pseudomonadota</taxon>
        <taxon>Alphaproteobacteria</taxon>
        <taxon>Hyphomicrobiales</taxon>
        <taxon>Nitrobacteraceae</taxon>
        <taxon>Rhodopseudomonas</taxon>
    </lineage>
</organism>
<evidence type="ECO:0000255" key="1">
    <source>
        <dbReference type="HAMAP-Rule" id="MF_01395"/>
    </source>
</evidence>
<evidence type="ECO:0000255" key="2">
    <source>
        <dbReference type="PROSITE-ProRule" id="PRU01136"/>
    </source>
</evidence>
<keyword id="KW-0067">ATP-binding</keyword>
<keyword id="KW-0963">Cytoplasm</keyword>
<keyword id="KW-0275">Fatty acid biosynthesis</keyword>
<keyword id="KW-0276">Fatty acid metabolism</keyword>
<keyword id="KW-0444">Lipid biosynthesis</keyword>
<keyword id="KW-0443">Lipid metabolism</keyword>
<keyword id="KW-0547">Nucleotide-binding</keyword>
<keyword id="KW-0808">Transferase</keyword>
<gene>
    <name evidence="1" type="primary">accD</name>
    <name type="ordered locus">RPD_0199</name>
</gene>
<feature type="chain" id="PRO_0000389836" description="Acetyl-coenzyme A carboxylase carboxyl transferase subunit beta">
    <location>
        <begin position="1"/>
        <end position="322"/>
    </location>
</feature>
<feature type="domain" description="CoA carboxyltransferase N-terminal" evidence="2">
    <location>
        <begin position="24"/>
        <end position="293"/>
    </location>
</feature>
<reference key="1">
    <citation type="submission" date="2006-03" db="EMBL/GenBank/DDBJ databases">
        <title>Complete sequence of Rhodopseudomonas palustris BisB5.</title>
        <authorList>
            <consortium name="US DOE Joint Genome Institute"/>
            <person name="Copeland A."/>
            <person name="Lucas S."/>
            <person name="Lapidus A."/>
            <person name="Barry K."/>
            <person name="Detter J.C."/>
            <person name="Glavina del Rio T."/>
            <person name="Hammon N."/>
            <person name="Israni S."/>
            <person name="Dalin E."/>
            <person name="Tice H."/>
            <person name="Pitluck S."/>
            <person name="Chain P."/>
            <person name="Malfatti S."/>
            <person name="Shin M."/>
            <person name="Vergez L."/>
            <person name="Schmutz J."/>
            <person name="Larimer F."/>
            <person name="Land M."/>
            <person name="Hauser L."/>
            <person name="Pelletier D.A."/>
            <person name="Kyrpides N."/>
            <person name="Lykidis A."/>
            <person name="Oda Y."/>
            <person name="Harwood C.S."/>
            <person name="Richardson P."/>
        </authorList>
    </citation>
    <scope>NUCLEOTIDE SEQUENCE [LARGE SCALE GENOMIC DNA]</scope>
    <source>
        <strain>BisB5</strain>
    </source>
</reference>
<comment type="function">
    <text evidence="1">Component of the acetyl coenzyme A carboxylase (ACC) complex. Biotin carboxylase (BC) catalyzes the carboxylation of biotin on its carrier protein (BCCP) and then the CO(2) group is transferred by the transcarboxylase to acetyl-CoA to form malonyl-CoA.</text>
</comment>
<comment type="catalytic activity">
    <reaction evidence="1">
        <text>N(6)-carboxybiotinyl-L-lysyl-[protein] + acetyl-CoA = N(6)-biotinyl-L-lysyl-[protein] + malonyl-CoA</text>
        <dbReference type="Rhea" id="RHEA:54728"/>
        <dbReference type="Rhea" id="RHEA-COMP:10505"/>
        <dbReference type="Rhea" id="RHEA-COMP:10506"/>
        <dbReference type="ChEBI" id="CHEBI:57288"/>
        <dbReference type="ChEBI" id="CHEBI:57384"/>
        <dbReference type="ChEBI" id="CHEBI:83144"/>
        <dbReference type="ChEBI" id="CHEBI:83145"/>
        <dbReference type="EC" id="2.1.3.15"/>
    </reaction>
</comment>
<comment type="pathway">
    <text evidence="1">Lipid metabolism; malonyl-CoA biosynthesis; malonyl-CoA from acetyl-CoA: step 1/1.</text>
</comment>
<comment type="subunit">
    <text evidence="1">Acetyl-CoA carboxylase is a heterohexamer composed of biotin carboxyl carrier protein (AccB), biotin carboxylase (AccC) and two subunits each of ACCase subunit alpha (AccA) and ACCase subunit beta (AccD).</text>
</comment>
<comment type="subcellular location">
    <subcellularLocation>
        <location evidence="1">Cytoplasm</location>
    </subcellularLocation>
</comment>
<comment type="similarity">
    <text evidence="1">Belongs to the AccD/PCCB family.</text>
</comment>
<dbReference type="EC" id="2.1.3.15" evidence="1"/>
<dbReference type="EMBL" id="CP000283">
    <property type="protein sequence ID" value="ABE37439.1"/>
    <property type="molecule type" value="Genomic_DNA"/>
</dbReference>
<dbReference type="SMR" id="Q13EQ0"/>
<dbReference type="STRING" id="316057.RPD_0199"/>
<dbReference type="KEGG" id="rpd:RPD_0199"/>
<dbReference type="eggNOG" id="COG0777">
    <property type="taxonomic scope" value="Bacteria"/>
</dbReference>
<dbReference type="HOGENOM" id="CLU_015486_1_0_5"/>
<dbReference type="BioCyc" id="RPAL316057:RPD_RS01010-MONOMER"/>
<dbReference type="UniPathway" id="UPA00655">
    <property type="reaction ID" value="UER00711"/>
</dbReference>
<dbReference type="Proteomes" id="UP000001818">
    <property type="component" value="Chromosome"/>
</dbReference>
<dbReference type="GO" id="GO:0009329">
    <property type="term" value="C:acetate CoA-transferase complex"/>
    <property type="evidence" value="ECO:0007669"/>
    <property type="project" value="TreeGrafter"/>
</dbReference>
<dbReference type="GO" id="GO:0003989">
    <property type="term" value="F:acetyl-CoA carboxylase activity"/>
    <property type="evidence" value="ECO:0007669"/>
    <property type="project" value="InterPro"/>
</dbReference>
<dbReference type="GO" id="GO:0005524">
    <property type="term" value="F:ATP binding"/>
    <property type="evidence" value="ECO:0007669"/>
    <property type="project" value="UniProtKB-KW"/>
</dbReference>
<dbReference type="GO" id="GO:0016743">
    <property type="term" value="F:carboxyl- or carbamoyltransferase activity"/>
    <property type="evidence" value="ECO:0007669"/>
    <property type="project" value="UniProtKB-UniRule"/>
</dbReference>
<dbReference type="GO" id="GO:0006633">
    <property type="term" value="P:fatty acid biosynthetic process"/>
    <property type="evidence" value="ECO:0007669"/>
    <property type="project" value="UniProtKB-KW"/>
</dbReference>
<dbReference type="GO" id="GO:2001295">
    <property type="term" value="P:malonyl-CoA biosynthetic process"/>
    <property type="evidence" value="ECO:0007669"/>
    <property type="project" value="UniProtKB-UniRule"/>
</dbReference>
<dbReference type="Gene3D" id="3.90.226.10">
    <property type="entry name" value="2-enoyl-CoA Hydratase, Chain A, domain 1"/>
    <property type="match status" value="1"/>
</dbReference>
<dbReference type="HAMAP" id="MF_01395">
    <property type="entry name" value="AcetylCoA_CT_beta"/>
    <property type="match status" value="1"/>
</dbReference>
<dbReference type="InterPro" id="IPR034733">
    <property type="entry name" value="AcCoA_carboxyl_beta"/>
</dbReference>
<dbReference type="InterPro" id="IPR000438">
    <property type="entry name" value="Acetyl_CoA_COase_Trfase_b_su"/>
</dbReference>
<dbReference type="InterPro" id="IPR029045">
    <property type="entry name" value="ClpP/crotonase-like_dom_sf"/>
</dbReference>
<dbReference type="InterPro" id="IPR011762">
    <property type="entry name" value="COA_CT_N"/>
</dbReference>
<dbReference type="NCBIfam" id="TIGR00515">
    <property type="entry name" value="accD"/>
    <property type="match status" value="1"/>
</dbReference>
<dbReference type="PANTHER" id="PTHR42995">
    <property type="entry name" value="ACETYL-COENZYME A CARBOXYLASE CARBOXYL TRANSFERASE SUBUNIT BETA, CHLOROPLASTIC"/>
    <property type="match status" value="1"/>
</dbReference>
<dbReference type="PANTHER" id="PTHR42995:SF5">
    <property type="entry name" value="ACETYL-COENZYME A CARBOXYLASE CARBOXYL TRANSFERASE SUBUNIT BETA, CHLOROPLASTIC"/>
    <property type="match status" value="1"/>
</dbReference>
<dbReference type="Pfam" id="PF01039">
    <property type="entry name" value="Carboxyl_trans"/>
    <property type="match status" value="1"/>
</dbReference>
<dbReference type="PRINTS" id="PR01070">
    <property type="entry name" value="ACCCTRFRASEB"/>
</dbReference>
<dbReference type="SUPFAM" id="SSF52096">
    <property type="entry name" value="ClpP/crotonase"/>
    <property type="match status" value="1"/>
</dbReference>
<dbReference type="PROSITE" id="PS50980">
    <property type="entry name" value="COA_CT_NTER"/>
    <property type="match status" value="1"/>
</dbReference>